<reference key="1">
    <citation type="submission" date="2006-03" db="EMBL/GenBank/DDBJ databases">
        <title>Complete sequence of Rhodopseudomonas palustris BisB5.</title>
        <authorList>
            <consortium name="US DOE Joint Genome Institute"/>
            <person name="Copeland A."/>
            <person name="Lucas S."/>
            <person name="Lapidus A."/>
            <person name="Barry K."/>
            <person name="Detter J.C."/>
            <person name="Glavina del Rio T."/>
            <person name="Hammon N."/>
            <person name="Israni S."/>
            <person name="Dalin E."/>
            <person name="Tice H."/>
            <person name="Pitluck S."/>
            <person name="Chain P."/>
            <person name="Malfatti S."/>
            <person name="Shin M."/>
            <person name="Vergez L."/>
            <person name="Schmutz J."/>
            <person name="Larimer F."/>
            <person name="Land M."/>
            <person name="Hauser L."/>
            <person name="Pelletier D.A."/>
            <person name="Kyrpides N."/>
            <person name="Lykidis A."/>
            <person name="Oda Y."/>
            <person name="Harwood C.S."/>
            <person name="Richardson P."/>
        </authorList>
    </citation>
    <scope>NUCLEOTIDE SEQUENCE [LARGE SCALE GENOMIC DNA]</scope>
    <source>
        <strain>BisB5</strain>
    </source>
</reference>
<name>NUSB_RHOPS</name>
<dbReference type="EMBL" id="CP000283">
    <property type="protein sequence ID" value="ABE39905.1"/>
    <property type="molecule type" value="Genomic_DNA"/>
</dbReference>
<dbReference type="SMR" id="Q136T4"/>
<dbReference type="STRING" id="316057.RPD_2676"/>
<dbReference type="KEGG" id="rpd:RPD_2676"/>
<dbReference type="eggNOG" id="COG0781">
    <property type="taxonomic scope" value="Bacteria"/>
</dbReference>
<dbReference type="HOGENOM" id="CLU_087843_4_0_5"/>
<dbReference type="Proteomes" id="UP000001818">
    <property type="component" value="Chromosome"/>
</dbReference>
<dbReference type="GO" id="GO:0005829">
    <property type="term" value="C:cytosol"/>
    <property type="evidence" value="ECO:0007669"/>
    <property type="project" value="TreeGrafter"/>
</dbReference>
<dbReference type="GO" id="GO:0003723">
    <property type="term" value="F:RNA binding"/>
    <property type="evidence" value="ECO:0007669"/>
    <property type="project" value="UniProtKB-UniRule"/>
</dbReference>
<dbReference type="GO" id="GO:0006353">
    <property type="term" value="P:DNA-templated transcription termination"/>
    <property type="evidence" value="ECO:0007669"/>
    <property type="project" value="UniProtKB-UniRule"/>
</dbReference>
<dbReference type="GO" id="GO:0031564">
    <property type="term" value="P:transcription antitermination"/>
    <property type="evidence" value="ECO:0007669"/>
    <property type="project" value="UniProtKB-KW"/>
</dbReference>
<dbReference type="Gene3D" id="1.10.940.10">
    <property type="entry name" value="NusB-like"/>
    <property type="match status" value="1"/>
</dbReference>
<dbReference type="HAMAP" id="MF_00073">
    <property type="entry name" value="NusB"/>
    <property type="match status" value="1"/>
</dbReference>
<dbReference type="InterPro" id="IPR035926">
    <property type="entry name" value="NusB-like_sf"/>
</dbReference>
<dbReference type="InterPro" id="IPR011605">
    <property type="entry name" value="NusB_fam"/>
</dbReference>
<dbReference type="InterPro" id="IPR006027">
    <property type="entry name" value="NusB_RsmB_TIM44"/>
</dbReference>
<dbReference type="NCBIfam" id="TIGR01951">
    <property type="entry name" value="nusB"/>
    <property type="match status" value="1"/>
</dbReference>
<dbReference type="PANTHER" id="PTHR11078:SF3">
    <property type="entry name" value="ANTITERMINATION NUSB DOMAIN-CONTAINING PROTEIN"/>
    <property type="match status" value="1"/>
</dbReference>
<dbReference type="PANTHER" id="PTHR11078">
    <property type="entry name" value="N UTILIZATION SUBSTANCE PROTEIN B-RELATED"/>
    <property type="match status" value="1"/>
</dbReference>
<dbReference type="Pfam" id="PF01029">
    <property type="entry name" value="NusB"/>
    <property type="match status" value="1"/>
</dbReference>
<dbReference type="SUPFAM" id="SSF48013">
    <property type="entry name" value="NusB-like"/>
    <property type="match status" value="1"/>
</dbReference>
<protein>
    <recommendedName>
        <fullName evidence="1">Transcription antitermination protein NusB</fullName>
    </recommendedName>
    <alternativeName>
        <fullName evidence="1">Antitermination factor NusB</fullName>
    </alternativeName>
</protein>
<proteinExistence type="inferred from homology"/>
<gene>
    <name evidence="1" type="primary">nusB</name>
    <name type="ordered locus">RPD_2676</name>
</gene>
<organism>
    <name type="scientific">Rhodopseudomonas palustris (strain BisB5)</name>
    <dbReference type="NCBI Taxonomy" id="316057"/>
    <lineage>
        <taxon>Bacteria</taxon>
        <taxon>Pseudomonadati</taxon>
        <taxon>Pseudomonadota</taxon>
        <taxon>Alphaproteobacteria</taxon>
        <taxon>Hyphomicrobiales</taxon>
        <taxon>Nitrobacteraceae</taxon>
        <taxon>Rhodopseudomonas</taxon>
    </lineage>
</organism>
<feature type="chain" id="PRO_0000265577" description="Transcription antitermination protein NusB">
    <location>
        <begin position="1"/>
        <end position="174"/>
    </location>
</feature>
<feature type="region of interest" description="Disordered" evidence="2">
    <location>
        <begin position="1"/>
        <end position="28"/>
    </location>
</feature>
<feature type="compositionally biased region" description="Basic and acidic residues" evidence="2">
    <location>
        <begin position="16"/>
        <end position="25"/>
    </location>
</feature>
<sequence length="174" mass="19409">MVEPKKPFMRKPPPKTGDKKPGDRKANRRGAARLAAVQALYQMDIGGAGIDDTFAEFESHWIGNEVEGDQYLPAEAAFFRDIVSGVVRDQTKLDPLIDEALAKGWPLARIDAIIRAVMRAGAYELEHRKDIPARVVVSEYVDVAHAFVEKDETGMVNAVLDQIARQFRADEFTK</sequence>
<keyword id="KW-0694">RNA-binding</keyword>
<keyword id="KW-0804">Transcription</keyword>
<keyword id="KW-0889">Transcription antitermination</keyword>
<keyword id="KW-0805">Transcription regulation</keyword>
<accession>Q136T4</accession>
<comment type="function">
    <text evidence="1">Involved in transcription antitermination. Required for transcription of ribosomal RNA (rRNA) genes. Binds specifically to the boxA antiterminator sequence of the ribosomal RNA (rrn) operons.</text>
</comment>
<comment type="similarity">
    <text evidence="1">Belongs to the NusB family.</text>
</comment>
<evidence type="ECO:0000255" key="1">
    <source>
        <dbReference type="HAMAP-Rule" id="MF_00073"/>
    </source>
</evidence>
<evidence type="ECO:0000256" key="2">
    <source>
        <dbReference type="SAM" id="MobiDB-lite"/>
    </source>
</evidence>